<sequence length="69" mass="8060">MKAKEIRDLTTSEIEEQIKSSKEELFNLRFQLATGQLEETARIRTVRKTIARLKTVAREREIEQGKANQ</sequence>
<keyword id="KW-1185">Reference proteome</keyword>
<keyword id="KW-0687">Ribonucleoprotein</keyword>
<keyword id="KW-0689">Ribosomal protein</keyword>
<name>RL29_STAS1</name>
<reference key="1">
    <citation type="journal article" date="2005" name="Proc. Natl. Acad. Sci. U.S.A.">
        <title>Whole genome sequence of Staphylococcus saprophyticus reveals the pathogenesis of uncomplicated urinary tract infection.</title>
        <authorList>
            <person name="Kuroda M."/>
            <person name="Yamashita A."/>
            <person name="Hirakawa H."/>
            <person name="Kumano M."/>
            <person name="Morikawa K."/>
            <person name="Higashide M."/>
            <person name="Maruyama A."/>
            <person name="Inose Y."/>
            <person name="Matoba K."/>
            <person name="Toh H."/>
            <person name="Kuhara S."/>
            <person name="Hattori M."/>
            <person name="Ohta T."/>
        </authorList>
    </citation>
    <scope>NUCLEOTIDE SEQUENCE [LARGE SCALE GENOMIC DNA]</scope>
    <source>
        <strain>ATCC 15305 / DSM 20229 / NCIMB 8711 / NCTC 7292 / S-41</strain>
    </source>
</reference>
<feature type="chain" id="PRO_1000007621" description="Large ribosomal subunit protein uL29">
    <location>
        <begin position="1"/>
        <end position="69"/>
    </location>
</feature>
<comment type="similarity">
    <text evidence="1">Belongs to the universal ribosomal protein uL29 family.</text>
</comment>
<evidence type="ECO:0000255" key="1">
    <source>
        <dbReference type="HAMAP-Rule" id="MF_00374"/>
    </source>
</evidence>
<evidence type="ECO:0000305" key="2"/>
<protein>
    <recommendedName>
        <fullName evidence="1">Large ribosomal subunit protein uL29</fullName>
    </recommendedName>
    <alternativeName>
        <fullName evidence="2">50S ribosomal protein L29</fullName>
    </alternativeName>
</protein>
<proteinExistence type="inferred from homology"/>
<organism>
    <name type="scientific">Staphylococcus saprophyticus subsp. saprophyticus (strain ATCC 15305 / DSM 20229 / NCIMB 8711 / NCTC 7292 / S-41)</name>
    <dbReference type="NCBI Taxonomy" id="342451"/>
    <lineage>
        <taxon>Bacteria</taxon>
        <taxon>Bacillati</taxon>
        <taxon>Bacillota</taxon>
        <taxon>Bacilli</taxon>
        <taxon>Bacillales</taxon>
        <taxon>Staphylococcaceae</taxon>
        <taxon>Staphylococcus</taxon>
    </lineage>
</organism>
<accession>Q49ZG0</accession>
<dbReference type="EMBL" id="AP008934">
    <property type="protein sequence ID" value="BAE17816.1"/>
    <property type="molecule type" value="Genomic_DNA"/>
</dbReference>
<dbReference type="RefSeq" id="WP_002482620.1">
    <property type="nucleotide sequence ID" value="NZ_MTGA01000036.1"/>
</dbReference>
<dbReference type="SMR" id="Q49ZG0"/>
<dbReference type="GeneID" id="97227388"/>
<dbReference type="KEGG" id="ssp:SSP0671"/>
<dbReference type="eggNOG" id="COG0255">
    <property type="taxonomic scope" value="Bacteria"/>
</dbReference>
<dbReference type="HOGENOM" id="CLU_158491_5_2_9"/>
<dbReference type="OrthoDB" id="9815192at2"/>
<dbReference type="Proteomes" id="UP000006371">
    <property type="component" value="Chromosome"/>
</dbReference>
<dbReference type="GO" id="GO:0022625">
    <property type="term" value="C:cytosolic large ribosomal subunit"/>
    <property type="evidence" value="ECO:0007669"/>
    <property type="project" value="TreeGrafter"/>
</dbReference>
<dbReference type="GO" id="GO:0003735">
    <property type="term" value="F:structural constituent of ribosome"/>
    <property type="evidence" value="ECO:0007669"/>
    <property type="project" value="InterPro"/>
</dbReference>
<dbReference type="GO" id="GO:0006412">
    <property type="term" value="P:translation"/>
    <property type="evidence" value="ECO:0007669"/>
    <property type="project" value="UniProtKB-UniRule"/>
</dbReference>
<dbReference type="CDD" id="cd00427">
    <property type="entry name" value="Ribosomal_L29_HIP"/>
    <property type="match status" value="1"/>
</dbReference>
<dbReference type="FunFam" id="1.10.287.310:FF:000001">
    <property type="entry name" value="50S ribosomal protein L29"/>
    <property type="match status" value="1"/>
</dbReference>
<dbReference type="Gene3D" id="1.10.287.310">
    <property type="match status" value="1"/>
</dbReference>
<dbReference type="HAMAP" id="MF_00374">
    <property type="entry name" value="Ribosomal_uL29"/>
    <property type="match status" value="1"/>
</dbReference>
<dbReference type="InterPro" id="IPR050063">
    <property type="entry name" value="Ribosomal_protein_uL29"/>
</dbReference>
<dbReference type="InterPro" id="IPR001854">
    <property type="entry name" value="Ribosomal_uL29"/>
</dbReference>
<dbReference type="InterPro" id="IPR036049">
    <property type="entry name" value="Ribosomal_uL29_sf"/>
</dbReference>
<dbReference type="NCBIfam" id="TIGR00012">
    <property type="entry name" value="L29"/>
    <property type="match status" value="1"/>
</dbReference>
<dbReference type="PANTHER" id="PTHR10916">
    <property type="entry name" value="60S RIBOSOMAL PROTEIN L35/50S RIBOSOMAL PROTEIN L29"/>
    <property type="match status" value="1"/>
</dbReference>
<dbReference type="PANTHER" id="PTHR10916:SF0">
    <property type="entry name" value="LARGE RIBOSOMAL SUBUNIT PROTEIN UL29C"/>
    <property type="match status" value="1"/>
</dbReference>
<dbReference type="Pfam" id="PF00831">
    <property type="entry name" value="Ribosomal_L29"/>
    <property type="match status" value="1"/>
</dbReference>
<dbReference type="SUPFAM" id="SSF46561">
    <property type="entry name" value="Ribosomal protein L29 (L29p)"/>
    <property type="match status" value="1"/>
</dbReference>
<gene>
    <name evidence="1" type="primary">rpmC</name>
    <name type="ordered locus">SSP0671</name>
</gene>